<accession>Q2Y5Z1</accession>
<protein>
    <recommendedName>
        <fullName evidence="1">S-adenosylmethionine synthase</fullName>
        <shortName evidence="1">AdoMet synthase</shortName>
        <ecNumber evidence="1">2.5.1.6</ecNumber>
    </recommendedName>
    <alternativeName>
        <fullName evidence="1">MAT</fullName>
    </alternativeName>
    <alternativeName>
        <fullName evidence="1">Methionine adenosyltransferase</fullName>
    </alternativeName>
</protein>
<sequence>MSEYLFTSESVSEGHPDKVADQISDSILDAILAQDPNARVACETLCSTGLIVMSGEITTQANVDYMQVARAAVKRIGYNSSDIGFDYNTCAVLTAFNKQSPDIARGVNRTKEEEMDQGAGDQGLMFGYACDETPQLMPMPIYYAHRLMERQAELRKDGRLPWLRPDAKSQVSVRYLDGKPQRIETVVISTQHHPDISHTDLSEAIIEEVIKPVLPKKMLSGETRYLINPTGRFVVGGPMGDCGLTGRKIIVDSYGGTAHHGGGAFSGKDPSKVDRSAAYAGRYVAKNLVAAGIASRCEVQMAYAIGVARPVSLMVDTFGTGKIPDDKIVKLIERHFDLRPRGIIHGLDLLRPIYEKTAAYGHFGRDEPEFSWESTDKAAQLREEAGIEPAETEPLSLQA</sequence>
<comment type="function">
    <text evidence="1">Catalyzes the formation of S-adenosylmethionine (AdoMet) from methionine and ATP. The overall synthetic reaction is composed of two sequential steps, AdoMet formation and the subsequent tripolyphosphate hydrolysis which occurs prior to release of AdoMet from the enzyme.</text>
</comment>
<comment type="catalytic activity">
    <reaction evidence="1">
        <text>L-methionine + ATP + H2O = S-adenosyl-L-methionine + phosphate + diphosphate</text>
        <dbReference type="Rhea" id="RHEA:21080"/>
        <dbReference type="ChEBI" id="CHEBI:15377"/>
        <dbReference type="ChEBI" id="CHEBI:30616"/>
        <dbReference type="ChEBI" id="CHEBI:33019"/>
        <dbReference type="ChEBI" id="CHEBI:43474"/>
        <dbReference type="ChEBI" id="CHEBI:57844"/>
        <dbReference type="ChEBI" id="CHEBI:59789"/>
        <dbReference type="EC" id="2.5.1.6"/>
    </reaction>
</comment>
<comment type="cofactor">
    <cofactor evidence="1">
        <name>Mg(2+)</name>
        <dbReference type="ChEBI" id="CHEBI:18420"/>
    </cofactor>
    <text evidence="1">Binds 2 divalent ions per subunit.</text>
</comment>
<comment type="cofactor">
    <cofactor evidence="1">
        <name>K(+)</name>
        <dbReference type="ChEBI" id="CHEBI:29103"/>
    </cofactor>
    <text evidence="1">Binds 1 potassium ion per subunit.</text>
</comment>
<comment type="pathway">
    <text evidence="1">Amino-acid biosynthesis; S-adenosyl-L-methionine biosynthesis; S-adenosyl-L-methionine from L-methionine: step 1/1.</text>
</comment>
<comment type="subunit">
    <text evidence="1">Homotetramer; dimer of dimers.</text>
</comment>
<comment type="subcellular location">
    <subcellularLocation>
        <location evidence="1">Cytoplasm</location>
    </subcellularLocation>
</comment>
<comment type="similarity">
    <text evidence="1">Belongs to the AdoMet synthase family.</text>
</comment>
<name>METK_NITMU</name>
<organism>
    <name type="scientific">Nitrosospira multiformis (strain ATCC 25196 / NCIMB 11849 / C 71)</name>
    <dbReference type="NCBI Taxonomy" id="323848"/>
    <lineage>
        <taxon>Bacteria</taxon>
        <taxon>Pseudomonadati</taxon>
        <taxon>Pseudomonadota</taxon>
        <taxon>Betaproteobacteria</taxon>
        <taxon>Nitrosomonadales</taxon>
        <taxon>Nitrosomonadaceae</taxon>
        <taxon>Nitrosospira</taxon>
    </lineage>
</organism>
<feature type="chain" id="PRO_0000241010" description="S-adenosylmethionine synthase">
    <location>
        <begin position="1"/>
        <end position="399"/>
    </location>
</feature>
<feature type="region of interest" description="Flexible loop" evidence="1">
    <location>
        <begin position="99"/>
        <end position="109"/>
    </location>
</feature>
<feature type="binding site" description="in other chain" evidence="1">
    <location>
        <position position="15"/>
    </location>
    <ligand>
        <name>ATP</name>
        <dbReference type="ChEBI" id="CHEBI:30616"/>
        <note>ligand shared between two neighboring subunits</note>
    </ligand>
</feature>
<feature type="binding site" evidence="1">
    <location>
        <position position="17"/>
    </location>
    <ligand>
        <name>Mg(2+)</name>
        <dbReference type="ChEBI" id="CHEBI:18420"/>
    </ligand>
</feature>
<feature type="binding site" evidence="1">
    <location>
        <position position="43"/>
    </location>
    <ligand>
        <name>K(+)</name>
        <dbReference type="ChEBI" id="CHEBI:29103"/>
    </ligand>
</feature>
<feature type="binding site" description="in other chain" evidence="1">
    <location>
        <position position="56"/>
    </location>
    <ligand>
        <name>L-methionine</name>
        <dbReference type="ChEBI" id="CHEBI:57844"/>
        <note>ligand shared between two neighboring subunits</note>
    </ligand>
</feature>
<feature type="binding site" description="in other chain" evidence="1">
    <location>
        <position position="99"/>
    </location>
    <ligand>
        <name>L-methionine</name>
        <dbReference type="ChEBI" id="CHEBI:57844"/>
        <note>ligand shared between two neighboring subunits</note>
    </ligand>
</feature>
<feature type="binding site" description="in other chain" evidence="1">
    <location>
        <begin position="166"/>
        <end position="168"/>
    </location>
    <ligand>
        <name>ATP</name>
        <dbReference type="ChEBI" id="CHEBI:30616"/>
        <note>ligand shared between two neighboring subunits</note>
    </ligand>
</feature>
<feature type="binding site" description="in other chain" evidence="1">
    <location>
        <begin position="232"/>
        <end position="233"/>
    </location>
    <ligand>
        <name>ATP</name>
        <dbReference type="ChEBI" id="CHEBI:30616"/>
        <note>ligand shared between two neighboring subunits</note>
    </ligand>
</feature>
<feature type="binding site" evidence="1">
    <location>
        <position position="241"/>
    </location>
    <ligand>
        <name>ATP</name>
        <dbReference type="ChEBI" id="CHEBI:30616"/>
        <note>ligand shared between two neighboring subunits</note>
    </ligand>
</feature>
<feature type="binding site" evidence="1">
    <location>
        <position position="241"/>
    </location>
    <ligand>
        <name>L-methionine</name>
        <dbReference type="ChEBI" id="CHEBI:57844"/>
        <note>ligand shared between two neighboring subunits</note>
    </ligand>
</feature>
<feature type="binding site" description="in other chain" evidence="1">
    <location>
        <begin position="247"/>
        <end position="248"/>
    </location>
    <ligand>
        <name>ATP</name>
        <dbReference type="ChEBI" id="CHEBI:30616"/>
        <note>ligand shared between two neighboring subunits</note>
    </ligand>
</feature>
<feature type="binding site" evidence="1">
    <location>
        <position position="264"/>
    </location>
    <ligand>
        <name>ATP</name>
        <dbReference type="ChEBI" id="CHEBI:30616"/>
        <note>ligand shared between two neighboring subunits</note>
    </ligand>
</feature>
<feature type="binding site" evidence="1">
    <location>
        <position position="268"/>
    </location>
    <ligand>
        <name>ATP</name>
        <dbReference type="ChEBI" id="CHEBI:30616"/>
        <note>ligand shared between two neighboring subunits</note>
    </ligand>
</feature>
<feature type="binding site" description="in other chain" evidence="1">
    <location>
        <position position="272"/>
    </location>
    <ligand>
        <name>L-methionine</name>
        <dbReference type="ChEBI" id="CHEBI:57844"/>
        <note>ligand shared between two neighboring subunits</note>
    </ligand>
</feature>
<evidence type="ECO:0000255" key="1">
    <source>
        <dbReference type="HAMAP-Rule" id="MF_00086"/>
    </source>
</evidence>
<keyword id="KW-0067">ATP-binding</keyword>
<keyword id="KW-0963">Cytoplasm</keyword>
<keyword id="KW-0460">Magnesium</keyword>
<keyword id="KW-0479">Metal-binding</keyword>
<keyword id="KW-0547">Nucleotide-binding</keyword>
<keyword id="KW-0554">One-carbon metabolism</keyword>
<keyword id="KW-0630">Potassium</keyword>
<keyword id="KW-1185">Reference proteome</keyword>
<keyword id="KW-0808">Transferase</keyword>
<dbReference type="EC" id="2.5.1.6" evidence="1"/>
<dbReference type="EMBL" id="CP000103">
    <property type="protein sequence ID" value="ABB75830.1"/>
    <property type="molecule type" value="Genomic_DNA"/>
</dbReference>
<dbReference type="RefSeq" id="WP_011381829.1">
    <property type="nucleotide sequence ID" value="NC_007614.1"/>
</dbReference>
<dbReference type="SMR" id="Q2Y5Z1"/>
<dbReference type="STRING" id="323848.Nmul_A2541"/>
<dbReference type="KEGG" id="nmu:Nmul_A2541"/>
<dbReference type="eggNOG" id="COG0192">
    <property type="taxonomic scope" value="Bacteria"/>
</dbReference>
<dbReference type="HOGENOM" id="CLU_041802_1_1_4"/>
<dbReference type="OrthoDB" id="9801686at2"/>
<dbReference type="UniPathway" id="UPA00315">
    <property type="reaction ID" value="UER00080"/>
</dbReference>
<dbReference type="Proteomes" id="UP000002718">
    <property type="component" value="Chromosome"/>
</dbReference>
<dbReference type="GO" id="GO:0005737">
    <property type="term" value="C:cytoplasm"/>
    <property type="evidence" value="ECO:0007669"/>
    <property type="project" value="UniProtKB-SubCell"/>
</dbReference>
<dbReference type="GO" id="GO:0005524">
    <property type="term" value="F:ATP binding"/>
    <property type="evidence" value="ECO:0007669"/>
    <property type="project" value="UniProtKB-UniRule"/>
</dbReference>
<dbReference type="GO" id="GO:0000287">
    <property type="term" value="F:magnesium ion binding"/>
    <property type="evidence" value="ECO:0007669"/>
    <property type="project" value="UniProtKB-UniRule"/>
</dbReference>
<dbReference type="GO" id="GO:0004478">
    <property type="term" value="F:methionine adenosyltransferase activity"/>
    <property type="evidence" value="ECO:0007669"/>
    <property type="project" value="UniProtKB-UniRule"/>
</dbReference>
<dbReference type="GO" id="GO:0006730">
    <property type="term" value="P:one-carbon metabolic process"/>
    <property type="evidence" value="ECO:0007669"/>
    <property type="project" value="UniProtKB-KW"/>
</dbReference>
<dbReference type="GO" id="GO:0006556">
    <property type="term" value="P:S-adenosylmethionine biosynthetic process"/>
    <property type="evidence" value="ECO:0007669"/>
    <property type="project" value="UniProtKB-UniRule"/>
</dbReference>
<dbReference type="CDD" id="cd18079">
    <property type="entry name" value="S-AdoMet_synt"/>
    <property type="match status" value="1"/>
</dbReference>
<dbReference type="FunFam" id="3.30.300.10:FF:000003">
    <property type="entry name" value="S-adenosylmethionine synthase"/>
    <property type="match status" value="1"/>
</dbReference>
<dbReference type="FunFam" id="3.30.300.10:FF:000004">
    <property type="entry name" value="S-adenosylmethionine synthase"/>
    <property type="match status" value="1"/>
</dbReference>
<dbReference type="Gene3D" id="3.30.300.10">
    <property type="match status" value="3"/>
</dbReference>
<dbReference type="HAMAP" id="MF_00086">
    <property type="entry name" value="S_AdoMet_synth1"/>
    <property type="match status" value="1"/>
</dbReference>
<dbReference type="InterPro" id="IPR022631">
    <property type="entry name" value="ADOMET_SYNTHASE_CS"/>
</dbReference>
<dbReference type="InterPro" id="IPR022630">
    <property type="entry name" value="S-AdoMet_synt_C"/>
</dbReference>
<dbReference type="InterPro" id="IPR022629">
    <property type="entry name" value="S-AdoMet_synt_central"/>
</dbReference>
<dbReference type="InterPro" id="IPR022628">
    <property type="entry name" value="S-AdoMet_synt_N"/>
</dbReference>
<dbReference type="InterPro" id="IPR002133">
    <property type="entry name" value="S-AdoMet_synthetase"/>
</dbReference>
<dbReference type="InterPro" id="IPR022636">
    <property type="entry name" value="S-AdoMet_synthetase_sfam"/>
</dbReference>
<dbReference type="NCBIfam" id="TIGR01034">
    <property type="entry name" value="metK"/>
    <property type="match status" value="1"/>
</dbReference>
<dbReference type="PANTHER" id="PTHR11964">
    <property type="entry name" value="S-ADENOSYLMETHIONINE SYNTHETASE"/>
    <property type="match status" value="1"/>
</dbReference>
<dbReference type="Pfam" id="PF02773">
    <property type="entry name" value="S-AdoMet_synt_C"/>
    <property type="match status" value="1"/>
</dbReference>
<dbReference type="Pfam" id="PF02772">
    <property type="entry name" value="S-AdoMet_synt_M"/>
    <property type="match status" value="1"/>
</dbReference>
<dbReference type="Pfam" id="PF00438">
    <property type="entry name" value="S-AdoMet_synt_N"/>
    <property type="match status" value="1"/>
</dbReference>
<dbReference type="PIRSF" id="PIRSF000497">
    <property type="entry name" value="MAT"/>
    <property type="match status" value="1"/>
</dbReference>
<dbReference type="SUPFAM" id="SSF55973">
    <property type="entry name" value="S-adenosylmethionine synthetase"/>
    <property type="match status" value="3"/>
</dbReference>
<dbReference type="PROSITE" id="PS00376">
    <property type="entry name" value="ADOMET_SYNTHASE_1"/>
    <property type="match status" value="1"/>
</dbReference>
<dbReference type="PROSITE" id="PS00377">
    <property type="entry name" value="ADOMET_SYNTHASE_2"/>
    <property type="match status" value="1"/>
</dbReference>
<gene>
    <name evidence="1" type="primary">metK</name>
    <name type="ordered locus">Nmul_A2541</name>
</gene>
<proteinExistence type="inferred from homology"/>
<reference key="1">
    <citation type="submission" date="2005-08" db="EMBL/GenBank/DDBJ databases">
        <title>Complete sequence of chromosome 1 of Nitrosospira multiformis ATCC 25196.</title>
        <authorList>
            <person name="Copeland A."/>
            <person name="Lucas S."/>
            <person name="Lapidus A."/>
            <person name="Barry K."/>
            <person name="Detter J.C."/>
            <person name="Glavina T."/>
            <person name="Hammon N."/>
            <person name="Israni S."/>
            <person name="Pitluck S."/>
            <person name="Chain P."/>
            <person name="Malfatti S."/>
            <person name="Shin M."/>
            <person name="Vergez L."/>
            <person name="Schmutz J."/>
            <person name="Larimer F."/>
            <person name="Land M."/>
            <person name="Hauser L."/>
            <person name="Kyrpides N."/>
            <person name="Lykidis A."/>
            <person name="Richardson P."/>
        </authorList>
    </citation>
    <scope>NUCLEOTIDE SEQUENCE [LARGE SCALE GENOMIC DNA]</scope>
    <source>
        <strain>ATCC 25196 / NCIMB 11849 / C 71</strain>
    </source>
</reference>